<protein>
    <recommendedName>
        <fullName evidence="1">DNA replication and repair protein RecF</fullName>
    </recommendedName>
</protein>
<keyword id="KW-0067">ATP-binding</keyword>
<keyword id="KW-0963">Cytoplasm</keyword>
<keyword id="KW-0227">DNA damage</keyword>
<keyword id="KW-0234">DNA repair</keyword>
<keyword id="KW-0235">DNA replication</keyword>
<keyword id="KW-0238">DNA-binding</keyword>
<keyword id="KW-0547">Nucleotide-binding</keyword>
<keyword id="KW-0742">SOS response</keyword>
<dbReference type="EMBL" id="CP000024">
    <property type="protein sequence ID" value="AAV63525.1"/>
    <property type="molecule type" value="Genomic_DNA"/>
</dbReference>
<dbReference type="RefSeq" id="WP_002947786.1">
    <property type="nucleotide sequence ID" value="NC_006449.1"/>
</dbReference>
<dbReference type="SMR" id="Q5LXI7"/>
<dbReference type="KEGG" id="stc:str2015"/>
<dbReference type="HOGENOM" id="CLU_040267_0_1_9"/>
<dbReference type="GO" id="GO:0005737">
    <property type="term" value="C:cytoplasm"/>
    <property type="evidence" value="ECO:0007669"/>
    <property type="project" value="UniProtKB-SubCell"/>
</dbReference>
<dbReference type="GO" id="GO:0005524">
    <property type="term" value="F:ATP binding"/>
    <property type="evidence" value="ECO:0007669"/>
    <property type="project" value="UniProtKB-UniRule"/>
</dbReference>
<dbReference type="GO" id="GO:0003697">
    <property type="term" value="F:single-stranded DNA binding"/>
    <property type="evidence" value="ECO:0007669"/>
    <property type="project" value="UniProtKB-UniRule"/>
</dbReference>
<dbReference type="GO" id="GO:0006260">
    <property type="term" value="P:DNA replication"/>
    <property type="evidence" value="ECO:0007669"/>
    <property type="project" value="UniProtKB-UniRule"/>
</dbReference>
<dbReference type="GO" id="GO:0000731">
    <property type="term" value="P:DNA synthesis involved in DNA repair"/>
    <property type="evidence" value="ECO:0007669"/>
    <property type="project" value="TreeGrafter"/>
</dbReference>
<dbReference type="GO" id="GO:0006302">
    <property type="term" value="P:double-strand break repair"/>
    <property type="evidence" value="ECO:0007669"/>
    <property type="project" value="TreeGrafter"/>
</dbReference>
<dbReference type="GO" id="GO:0009432">
    <property type="term" value="P:SOS response"/>
    <property type="evidence" value="ECO:0007669"/>
    <property type="project" value="UniProtKB-UniRule"/>
</dbReference>
<dbReference type="CDD" id="cd03242">
    <property type="entry name" value="ABC_RecF"/>
    <property type="match status" value="1"/>
</dbReference>
<dbReference type="Gene3D" id="3.40.50.300">
    <property type="entry name" value="P-loop containing nucleotide triphosphate hydrolases"/>
    <property type="match status" value="1"/>
</dbReference>
<dbReference type="Gene3D" id="1.20.1050.90">
    <property type="entry name" value="RecF/RecN/SMC, N-terminal domain"/>
    <property type="match status" value="1"/>
</dbReference>
<dbReference type="HAMAP" id="MF_00365">
    <property type="entry name" value="RecF"/>
    <property type="match status" value="1"/>
</dbReference>
<dbReference type="InterPro" id="IPR001238">
    <property type="entry name" value="DNA-binding_RecF"/>
</dbReference>
<dbReference type="InterPro" id="IPR018078">
    <property type="entry name" value="DNA-binding_RecF_CS"/>
</dbReference>
<dbReference type="InterPro" id="IPR027417">
    <property type="entry name" value="P-loop_NTPase"/>
</dbReference>
<dbReference type="InterPro" id="IPR003395">
    <property type="entry name" value="RecF/RecN/SMC_N"/>
</dbReference>
<dbReference type="InterPro" id="IPR042174">
    <property type="entry name" value="RecF_2"/>
</dbReference>
<dbReference type="NCBIfam" id="TIGR00611">
    <property type="entry name" value="recf"/>
    <property type="match status" value="1"/>
</dbReference>
<dbReference type="PANTHER" id="PTHR32182">
    <property type="entry name" value="DNA REPLICATION AND REPAIR PROTEIN RECF"/>
    <property type="match status" value="1"/>
</dbReference>
<dbReference type="PANTHER" id="PTHR32182:SF0">
    <property type="entry name" value="DNA REPLICATION AND REPAIR PROTEIN RECF"/>
    <property type="match status" value="1"/>
</dbReference>
<dbReference type="Pfam" id="PF02463">
    <property type="entry name" value="SMC_N"/>
    <property type="match status" value="1"/>
</dbReference>
<dbReference type="SUPFAM" id="SSF52540">
    <property type="entry name" value="P-loop containing nucleoside triphosphate hydrolases"/>
    <property type="match status" value="1"/>
</dbReference>
<dbReference type="PROSITE" id="PS00617">
    <property type="entry name" value="RECF_1"/>
    <property type="match status" value="1"/>
</dbReference>
<dbReference type="PROSITE" id="PS00618">
    <property type="entry name" value="RECF_2"/>
    <property type="match status" value="1"/>
</dbReference>
<organism>
    <name type="scientific">Streptococcus thermophilus (strain CNRZ 1066)</name>
    <dbReference type="NCBI Taxonomy" id="299768"/>
    <lineage>
        <taxon>Bacteria</taxon>
        <taxon>Bacillati</taxon>
        <taxon>Bacillota</taxon>
        <taxon>Bacilli</taxon>
        <taxon>Lactobacillales</taxon>
        <taxon>Streptococcaceae</taxon>
        <taxon>Streptococcus</taxon>
    </lineage>
</organism>
<accession>Q5LXI7</accession>
<evidence type="ECO:0000255" key="1">
    <source>
        <dbReference type="HAMAP-Rule" id="MF_00365"/>
    </source>
</evidence>
<proteinExistence type="inferred from homology"/>
<gene>
    <name evidence="1" type="primary">recF</name>
    <name type="ordered locus">str2015</name>
</gene>
<sequence>MWLEKIDIQHFRNYSEASVSFSPHLNIFLGRNAQGKTNILEAIYFLALTRSHRTHLDKELIQFQQNSLKLNGIVHRHSGNLPLEINLSNKGRVTKVNYLKQAKLSDYIGHMTVVLFAPEDLQLVKGSPSLRRKFIDIDLGQIKPVYLSDLSNYNHVLKQRNAYLKSTDKVDINFLSVLDEQLADFGARVIKHRLEFIKQLEEEADGHHSILSNQIERLKISYESNIPIQNSKDIREAFLTTLNQNHKRDIFKKNTGVGPHRDDLKFYINDMNASFGSQGQQRSLILSLKMAEIALIKKVTEEFPILLLDDVMSELDNHRQLKLLESIDEEVQTFMTTTSLDHLSNLPPNLKTFLVKNGTIYEKQVD</sequence>
<feature type="chain" id="PRO_0000236152" description="DNA replication and repair protein RecF">
    <location>
        <begin position="1"/>
        <end position="366"/>
    </location>
</feature>
<feature type="binding site" evidence="1">
    <location>
        <begin position="30"/>
        <end position="37"/>
    </location>
    <ligand>
        <name>ATP</name>
        <dbReference type="ChEBI" id="CHEBI:30616"/>
    </ligand>
</feature>
<reference key="1">
    <citation type="journal article" date="2004" name="Nat. Biotechnol.">
        <title>Complete sequence and comparative genome analysis of the dairy bacterium Streptococcus thermophilus.</title>
        <authorList>
            <person name="Bolotin A."/>
            <person name="Quinquis B."/>
            <person name="Renault P."/>
            <person name="Sorokin A."/>
            <person name="Ehrlich S.D."/>
            <person name="Kulakauskas S."/>
            <person name="Lapidus A."/>
            <person name="Goltsman E."/>
            <person name="Mazur M."/>
            <person name="Pusch G.D."/>
            <person name="Fonstein M."/>
            <person name="Overbeek R."/>
            <person name="Kyprides N."/>
            <person name="Purnelle B."/>
            <person name="Prozzi D."/>
            <person name="Ngui K."/>
            <person name="Masuy D."/>
            <person name="Hancy F."/>
            <person name="Burteau S."/>
            <person name="Boutry M."/>
            <person name="Delcour J."/>
            <person name="Goffeau A."/>
            <person name="Hols P."/>
        </authorList>
    </citation>
    <scope>NUCLEOTIDE SEQUENCE [LARGE SCALE GENOMIC DNA]</scope>
    <source>
        <strain>CNRZ 1066</strain>
    </source>
</reference>
<comment type="function">
    <text evidence="1">The RecF protein is involved in DNA metabolism; it is required for DNA replication and normal SOS inducibility. RecF binds preferentially to single-stranded, linear DNA. It also seems to bind ATP.</text>
</comment>
<comment type="subcellular location">
    <subcellularLocation>
        <location evidence="1">Cytoplasm</location>
    </subcellularLocation>
</comment>
<comment type="similarity">
    <text evidence="1">Belongs to the RecF family.</text>
</comment>
<name>RECF_STRT1</name>